<keyword id="KW-0966">Cell projection</keyword>
<keyword id="KW-0969">Cilium</keyword>
<keyword id="KW-0970">Cilium biogenesis/degradation</keyword>
<keyword id="KW-0963">Cytoplasm</keyword>
<keyword id="KW-0206">Cytoskeleton</keyword>
<keyword id="KW-1185">Reference proteome</keyword>
<comment type="function">
    <text evidence="1">Component of the tectonic-like complex, a complex localized at the transition zone of primary cilia and acting as a barrier that prevents diffusion of transmembrane proteins between the cilia and plasma membranes.</text>
</comment>
<comment type="subunit">
    <text evidence="1">Part of the tectonic-like complex (also named B9 complex).</text>
</comment>
<comment type="subcellular location">
    <subcellularLocation>
        <location evidence="1">Cytoplasm</location>
        <location evidence="1">Cytoskeleton</location>
        <location evidence="1">Cilium basal body</location>
    </subcellularLocation>
    <subcellularLocation>
        <location evidence="1">Cytoplasm</location>
        <location evidence="1">Cytoskeleton</location>
        <location evidence="1">Cilium axoneme</location>
    </subcellularLocation>
</comment>
<comment type="similarity">
    <text evidence="3">Belongs to the B9D family.</text>
</comment>
<organism>
    <name type="scientific">Danio rerio</name>
    <name type="common">Zebrafish</name>
    <name type="synonym">Brachydanio rerio</name>
    <dbReference type="NCBI Taxonomy" id="7955"/>
    <lineage>
        <taxon>Eukaryota</taxon>
        <taxon>Metazoa</taxon>
        <taxon>Chordata</taxon>
        <taxon>Craniata</taxon>
        <taxon>Vertebrata</taxon>
        <taxon>Euteleostomi</taxon>
        <taxon>Actinopterygii</taxon>
        <taxon>Neopterygii</taxon>
        <taxon>Teleostei</taxon>
        <taxon>Ostariophysi</taxon>
        <taxon>Cypriniformes</taxon>
        <taxon>Danionidae</taxon>
        <taxon>Danioninae</taxon>
        <taxon>Danio</taxon>
    </lineage>
</organism>
<proteinExistence type="evidence at transcript level"/>
<gene>
    <name type="primary">b9d2</name>
    <name type="ORF">zgc:92713</name>
</gene>
<name>B9D2_DANRE</name>
<sequence>MAELHIIGQIIGATGFPQNSLFCKWGVHTGGAWRLLSGLREGQTQVDMPQTGDMAYWSHPIDLHYTTKGLQGWPKLHLQVWHQDSFGRCQLYGYGYIHVPSSPGQHRLQCVTWRPLGSWQDQLSEMFVGGGPQLRSPDLIYSGADRYRLHTVGMGTVELELCIILRHFDRYGVES</sequence>
<dbReference type="EMBL" id="BC076193">
    <property type="protein sequence ID" value="AAH76193.1"/>
    <property type="molecule type" value="mRNA"/>
</dbReference>
<dbReference type="RefSeq" id="NP_001002394.1">
    <property type="nucleotide sequence ID" value="NM_001002394.1"/>
</dbReference>
<dbReference type="RefSeq" id="XP_005161219.1">
    <property type="nucleotide sequence ID" value="XM_005161162.5"/>
</dbReference>
<dbReference type="FunCoup" id="Q6DGZ1">
    <property type="interactions" value="257"/>
</dbReference>
<dbReference type="STRING" id="7955.ENSDARP00000007567"/>
<dbReference type="PaxDb" id="7955-ENSDARP00000007567"/>
<dbReference type="Ensembl" id="ENSDART00000008099">
    <property type="protein sequence ID" value="ENSDARP00000007567"/>
    <property type="gene ID" value="ENSDARG00000017385"/>
</dbReference>
<dbReference type="Ensembl" id="ENSDART00000189148">
    <property type="protein sequence ID" value="ENSDARP00000153034"/>
    <property type="gene ID" value="ENSDARG00000017385"/>
</dbReference>
<dbReference type="GeneID" id="436667"/>
<dbReference type="KEGG" id="dre:436667"/>
<dbReference type="AGR" id="ZFIN:ZDB-GENE-040718-90"/>
<dbReference type="CTD" id="80776"/>
<dbReference type="ZFIN" id="ZDB-GENE-040718-90">
    <property type="gene designation" value="b9d2"/>
</dbReference>
<dbReference type="eggNOG" id="KOG4028">
    <property type="taxonomic scope" value="Eukaryota"/>
</dbReference>
<dbReference type="HOGENOM" id="CLU_084934_2_1_1"/>
<dbReference type="InParanoid" id="Q6DGZ1"/>
<dbReference type="OMA" id="DVAYWCH"/>
<dbReference type="OrthoDB" id="184109at2759"/>
<dbReference type="PhylomeDB" id="Q6DGZ1"/>
<dbReference type="TreeFam" id="TF314883"/>
<dbReference type="PRO" id="PR:Q6DGZ1"/>
<dbReference type="Proteomes" id="UP000000437">
    <property type="component" value="Chromosome 21"/>
</dbReference>
<dbReference type="Bgee" id="ENSDARG00000017385">
    <property type="expression patterns" value="Expressed in mature ovarian follicle and 20 other cell types or tissues"/>
</dbReference>
<dbReference type="GO" id="GO:0005813">
    <property type="term" value="C:centrosome"/>
    <property type="evidence" value="ECO:0000250"/>
    <property type="project" value="UniProtKB"/>
</dbReference>
<dbReference type="GO" id="GO:0036064">
    <property type="term" value="C:ciliary basal body"/>
    <property type="evidence" value="ECO:0000250"/>
    <property type="project" value="UniProtKB"/>
</dbReference>
<dbReference type="GO" id="GO:0005929">
    <property type="term" value="C:cilium"/>
    <property type="evidence" value="ECO:0000314"/>
    <property type="project" value="ZFIN"/>
</dbReference>
<dbReference type="GO" id="GO:0005737">
    <property type="term" value="C:cytoplasm"/>
    <property type="evidence" value="ECO:0007669"/>
    <property type="project" value="UniProtKB-KW"/>
</dbReference>
<dbReference type="GO" id="GO:0036038">
    <property type="term" value="C:MKS complex"/>
    <property type="evidence" value="ECO:0000250"/>
    <property type="project" value="UniProtKB"/>
</dbReference>
<dbReference type="GO" id="GO:0043015">
    <property type="term" value="F:gamma-tubulin binding"/>
    <property type="evidence" value="ECO:0000250"/>
    <property type="project" value="UniProtKB"/>
</dbReference>
<dbReference type="GO" id="GO:0060271">
    <property type="term" value="P:cilium assembly"/>
    <property type="evidence" value="ECO:0000315"/>
    <property type="project" value="CACAO"/>
</dbReference>
<dbReference type="GO" id="GO:0001736">
    <property type="term" value="P:establishment of planar polarity"/>
    <property type="evidence" value="ECO:0000316"/>
    <property type="project" value="ZFIN"/>
</dbReference>
<dbReference type="GO" id="GO:0007163">
    <property type="term" value="P:establishment or maintenance of cell polarity"/>
    <property type="evidence" value="ECO:0000315"/>
    <property type="project" value="CACAO"/>
</dbReference>
<dbReference type="GO" id="GO:0036372">
    <property type="term" value="P:opsin transport"/>
    <property type="evidence" value="ECO:0000315"/>
    <property type="project" value="CACAO"/>
</dbReference>
<dbReference type="InterPro" id="IPR010796">
    <property type="entry name" value="C2_B9-type_dom"/>
</dbReference>
<dbReference type="PANTHER" id="PTHR12968">
    <property type="entry name" value="B9 DOMAIN-CONTAINING"/>
    <property type="match status" value="1"/>
</dbReference>
<dbReference type="PANTHER" id="PTHR12968:SF2">
    <property type="entry name" value="B9 DOMAIN-CONTAINING PROTEIN 2"/>
    <property type="match status" value="1"/>
</dbReference>
<dbReference type="Pfam" id="PF07162">
    <property type="entry name" value="B9-C2"/>
    <property type="match status" value="1"/>
</dbReference>
<dbReference type="PROSITE" id="PS51381">
    <property type="entry name" value="C2_B9"/>
    <property type="match status" value="1"/>
</dbReference>
<protein>
    <recommendedName>
        <fullName>B9 domain-containing protein 2</fullName>
    </recommendedName>
</protein>
<reference key="1">
    <citation type="submission" date="2004-07" db="EMBL/GenBank/DDBJ databases">
        <authorList>
            <consortium name="NIH - Zebrafish Gene Collection (ZGC) project"/>
        </authorList>
    </citation>
    <scope>NUCLEOTIDE SEQUENCE [LARGE SCALE MRNA]</scope>
    <source>
        <tissue>Eye</tissue>
    </source>
</reference>
<accession>Q6DGZ1</accession>
<evidence type="ECO:0000250" key="1"/>
<evidence type="ECO:0000255" key="2">
    <source>
        <dbReference type="PROSITE-ProRule" id="PRU00713"/>
    </source>
</evidence>
<evidence type="ECO:0000305" key="3"/>
<feature type="chain" id="PRO_0000307677" description="B9 domain-containing protein 2">
    <location>
        <begin position="1"/>
        <end position="175"/>
    </location>
</feature>
<feature type="domain" description="C2 B9-type" evidence="2">
    <location>
        <begin position="2"/>
        <end position="118"/>
    </location>
</feature>